<proteinExistence type="inferred from homology"/>
<name>LGT_WOLPM</name>
<reference key="1">
    <citation type="journal article" date="2004" name="PLoS Biol.">
        <title>Phylogenomics of the reproductive parasite Wolbachia pipientis wMel: a streamlined genome overrun by mobile genetic elements.</title>
        <authorList>
            <person name="Wu M."/>
            <person name="Sun L.V."/>
            <person name="Vamathevan J.J."/>
            <person name="Riegler M."/>
            <person name="DeBoy R.T."/>
            <person name="Brownlie J.C."/>
            <person name="McGraw E.A."/>
            <person name="Martin W."/>
            <person name="Esser C."/>
            <person name="Ahmadinejad N."/>
            <person name="Wiegand C."/>
            <person name="Madupu R."/>
            <person name="Beanan M.J."/>
            <person name="Brinkac L.M."/>
            <person name="Daugherty S.C."/>
            <person name="Durkin A.S."/>
            <person name="Kolonay J.F."/>
            <person name="Nelson W.C."/>
            <person name="Mohamoud Y."/>
            <person name="Lee P."/>
            <person name="Berry K.J."/>
            <person name="Young M.B."/>
            <person name="Utterback T.R."/>
            <person name="Weidman J.F."/>
            <person name="Nierman W.C."/>
            <person name="Paulsen I.T."/>
            <person name="Nelson K.E."/>
            <person name="Tettelin H."/>
            <person name="O'Neill S.L."/>
            <person name="Eisen J.A."/>
        </authorList>
    </citation>
    <scope>NUCLEOTIDE SEQUENCE [LARGE SCALE GENOMIC DNA]</scope>
</reference>
<feature type="chain" id="PRO_0000172715" description="Phosphatidylglycerol--prolipoprotein diacylglyceryl transferase">
    <location>
        <begin position="1"/>
        <end position="263"/>
    </location>
</feature>
<feature type="transmembrane region" description="Helical" evidence="1">
    <location>
        <begin position="6"/>
        <end position="26"/>
    </location>
</feature>
<feature type="transmembrane region" description="Helical" evidence="1">
    <location>
        <begin position="50"/>
        <end position="70"/>
    </location>
</feature>
<feature type="transmembrane region" description="Helical" evidence="1">
    <location>
        <begin position="85"/>
        <end position="105"/>
    </location>
</feature>
<feature type="transmembrane region" description="Helical" evidence="1">
    <location>
        <begin position="112"/>
        <end position="132"/>
    </location>
</feature>
<feature type="transmembrane region" description="Helical" evidence="1">
    <location>
        <begin position="169"/>
        <end position="189"/>
    </location>
</feature>
<feature type="transmembrane region" description="Helical" evidence="1">
    <location>
        <begin position="197"/>
        <end position="217"/>
    </location>
</feature>
<feature type="transmembrane region" description="Helical" evidence="1">
    <location>
        <begin position="233"/>
        <end position="253"/>
    </location>
</feature>
<feature type="binding site" evidence="1">
    <location>
        <position position="133"/>
    </location>
    <ligand>
        <name>a 1,2-diacyl-sn-glycero-3-phospho-(1'-sn-glycerol)</name>
        <dbReference type="ChEBI" id="CHEBI:64716"/>
    </ligand>
</feature>
<evidence type="ECO:0000255" key="1">
    <source>
        <dbReference type="HAMAP-Rule" id="MF_01147"/>
    </source>
</evidence>
<sequence>MSLNPVIFSIGPVSIYWYSLAYVLGIVFAYWYLHKLDDQKIFTKNFYDSLLTATIVGIILGGRLGYVLIYDPVLYISNPIEILKTWEGGMSFHGGAIGVLLAVIISCKRHNIPTFYALDLVSCGVPIGLFLGRIGNFINGELFGRVTTMPWGMVFPESGDNLLHHPSQLYEALFEGLLLFAVANSLFFLTRIRLYHGALTGIAVMWYGIARFFVEFFREPDYQIGYLWLDLTMGQLLSIPMVLLGMLVYLGALNLKFNTKSVT</sequence>
<gene>
    <name evidence="1" type="primary">lgt</name>
    <name type="ordered locus">WD_0768</name>
</gene>
<protein>
    <recommendedName>
        <fullName evidence="1">Phosphatidylglycerol--prolipoprotein diacylglyceryl transferase</fullName>
        <ecNumber evidence="1">2.5.1.145</ecNumber>
    </recommendedName>
</protein>
<dbReference type="EC" id="2.5.1.145" evidence="1"/>
<dbReference type="EMBL" id="AE017196">
    <property type="protein sequence ID" value="AAS14458.1"/>
    <property type="molecule type" value="Genomic_DNA"/>
</dbReference>
<dbReference type="RefSeq" id="WP_010962823.1">
    <property type="nucleotide sequence ID" value="NZ_OX384529.1"/>
</dbReference>
<dbReference type="SMR" id="Q73H08"/>
<dbReference type="EnsemblBacteria" id="AAS14458">
    <property type="protein sequence ID" value="AAS14458"/>
    <property type="gene ID" value="WD_0768"/>
</dbReference>
<dbReference type="GeneID" id="70036249"/>
<dbReference type="KEGG" id="wol:WD_0768"/>
<dbReference type="eggNOG" id="COG0682">
    <property type="taxonomic scope" value="Bacteria"/>
</dbReference>
<dbReference type="UniPathway" id="UPA00664"/>
<dbReference type="Proteomes" id="UP000008215">
    <property type="component" value="Chromosome"/>
</dbReference>
<dbReference type="GO" id="GO:0005886">
    <property type="term" value="C:plasma membrane"/>
    <property type="evidence" value="ECO:0007669"/>
    <property type="project" value="UniProtKB-SubCell"/>
</dbReference>
<dbReference type="GO" id="GO:0008961">
    <property type="term" value="F:phosphatidylglycerol-prolipoprotein diacylglyceryl transferase activity"/>
    <property type="evidence" value="ECO:0007669"/>
    <property type="project" value="UniProtKB-UniRule"/>
</dbReference>
<dbReference type="GO" id="GO:0042158">
    <property type="term" value="P:lipoprotein biosynthetic process"/>
    <property type="evidence" value="ECO:0007669"/>
    <property type="project" value="UniProtKB-UniRule"/>
</dbReference>
<dbReference type="HAMAP" id="MF_01147">
    <property type="entry name" value="Lgt"/>
    <property type="match status" value="1"/>
</dbReference>
<dbReference type="InterPro" id="IPR001640">
    <property type="entry name" value="Lgt"/>
</dbReference>
<dbReference type="NCBIfam" id="TIGR00544">
    <property type="entry name" value="lgt"/>
    <property type="match status" value="1"/>
</dbReference>
<dbReference type="PANTHER" id="PTHR30589:SF0">
    <property type="entry name" value="PHOSPHATIDYLGLYCEROL--PROLIPOPROTEIN DIACYLGLYCERYL TRANSFERASE"/>
    <property type="match status" value="1"/>
</dbReference>
<dbReference type="PANTHER" id="PTHR30589">
    <property type="entry name" value="PROLIPOPROTEIN DIACYLGLYCERYL TRANSFERASE"/>
    <property type="match status" value="1"/>
</dbReference>
<dbReference type="Pfam" id="PF01790">
    <property type="entry name" value="LGT"/>
    <property type="match status" value="1"/>
</dbReference>
<dbReference type="PROSITE" id="PS01311">
    <property type="entry name" value="LGT"/>
    <property type="match status" value="1"/>
</dbReference>
<comment type="function">
    <text evidence="1">Catalyzes the transfer of the diacylglyceryl group from phosphatidylglycerol to the sulfhydryl group of the N-terminal cysteine of a prolipoprotein, the first step in the formation of mature lipoproteins.</text>
</comment>
<comment type="catalytic activity">
    <reaction evidence="1">
        <text>L-cysteinyl-[prolipoprotein] + a 1,2-diacyl-sn-glycero-3-phospho-(1'-sn-glycerol) = an S-1,2-diacyl-sn-glyceryl-L-cysteinyl-[prolipoprotein] + sn-glycerol 1-phosphate + H(+)</text>
        <dbReference type="Rhea" id="RHEA:56712"/>
        <dbReference type="Rhea" id="RHEA-COMP:14679"/>
        <dbReference type="Rhea" id="RHEA-COMP:14680"/>
        <dbReference type="ChEBI" id="CHEBI:15378"/>
        <dbReference type="ChEBI" id="CHEBI:29950"/>
        <dbReference type="ChEBI" id="CHEBI:57685"/>
        <dbReference type="ChEBI" id="CHEBI:64716"/>
        <dbReference type="ChEBI" id="CHEBI:140658"/>
        <dbReference type="EC" id="2.5.1.145"/>
    </reaction>
</comment>
<comment type="pathway">
    <text evidence="1">Protein modification; lipoprotein biosynthesis (diacylglyceryl transfer).</text>
</comment>
<comment type="subcellular location">
    <subcellularLocation>
        <location evidence="1">Cell membrane</location>
        <topology evidence="1">Multi-pass membrane protein</topology>
    </subcellularLocation>
</comment>
<comment type="similarity">
    <text evidence="1">Belongs to the Lgt family.</text>
</comment>
<organism>
    <name type="scientific">Wolbachia pipientis wMel</name>
    <dbReference type="NCBI Taxonomy" id="163164"/>
    <lineage>
        <taxon>Bacteria</taxon>
        <taxon>Pseudomonadati</taxon>
        <taxon>Pseudomonadota</taxon>
        <taxon>Alphaproteobacteria</taxon>
        <taxon>Rickettsiales</taxon>
        <taxon>Anaplasmataceae</taxon>
        <taxon>Wolbachieae</taxon>
        <taxon>Wolbachia</taxon>
    </lineage>
</organism>
<keyword id="KW-1003">Cell membrane</keyword>
<keyword id="KW-0472">Membrane</keyword>
<keyword id="KW-0808">Transferase</keyword>
<keyword id="KW-0812">Transmembrane</keyword>
<keyword id="KW-1133">Transmembrane helix</keyword>
<accession>Q73H08</accession>